<name>RIBL_METSF</name>
<feature type="chain" id="PRO_0000406249" description="FAD synthase">
    <location>
        <begin position="1"/>
        <end position="151"/>
    </location>
</feature>
<feature type="binding site" evidence="1">
    <location>
        <begin position="12"/>
        <end position="13"/>
    </location>
    <ligand>
        <name>ATP</name>
        <dbReference type="ChEBI" id="CHEBI:30616"/>
    </ligand>
</feature>
<feature type="binding site" evidence="1">
    <location>
        <begin position="17"/>
        <end position="20"/>
    </location>
    <ligand>
        <name>ATP</name>
        <dbReference type="ChEBI" id="CHEBI:30616"/>
    </ligand>
</feature>
<feature type="binding site" evidence="1">
    <location>
        <position position="97"/>
    </location>
    <ligand>
        <name>ATP</name>
        <dbReference type="ChEBI" id="CHEBI:30616"/>
    </ligand>
</feature>
<feature type="binding site" evidence="1">
    <location>
        <position position="125"/>
    </location>
    <ligand>
        <name>ATP</name>
        <dbReference type="ChEBI" id="CHEBI:30616"/>
    </ligand>
</feature>
<gene>
    <name evidence="1" type="primary">ribL</name>
    <name type="ordered locus">MFS40622_0810</name>
</gene>
<comment type="function">
    <text evidence="1">Catalyzes the transfer of the AMP portion of ATP to flavin mononucleotide (FMN) to produce flavin adenine dinucleotide (FAD) coenzyme.</text>
</comment>
<comment type="catalytic activity">
    <reaction evidence="1">
        <text>FMN + ATP + H(+) = FAD + diphosphate</text>
        <dbReference type="Rhea" id="RHEA:17237"/>
        <dbReference type="ChEBI" id="CHEBI:15378"/>
        <dbReference type="ChEBI" id="CHEBI:30616"/>
        <dbReference type="ChEBI" id="CHEBI:33019"/>
        <dbReference type="ChEBI" id="CHEBI:57692"/>
        <dbReference type="ChEBI" id="CHEBI:58210"/>
        <dbReference type="EC" id="2.7.7.2"/>
    </reaction>
</comment>
<comment type="cofactor">
    <cofactor evidence="1">
        <name>a divalent metal cation</name>
        <dbReference type="ChEBI" id="CHEBI:60240"/>
    </cofactor>
</comment>
<comment type="pathway">
    <text evidence="1">Cofactor biosynthesis; FAD biosynthesis; FAD from FMN: step 1/1.</text>
</comment>
<comment type="subunit">
    <text evidence="1">Homodimer.</text>
</comment>
<comment type="similarity">
    <text evidence="1">Belongs to the archaeal FAD synthase family.</text>
</comment>
<organism>
    <name type="scientific">Methanocaldococcus sp. (strain FS406-22)</name>
    <dbReference type="NCBI Taxonomy" id="644281"/>
    <lineage>
        <taxon>Archaea</taxon>
        <taxon>Methanobacteriati</taxon>
        <taxon>Methanobacteriota</taxon>
        <taxon>Methanomada group</taxon>
        <taxon>Methanococci</taxon>
        <taxon>Methanococcales</taxon>
        <taxon>Methanocaldococcaceae</taxon>
        <taxon>Methanocaldococcus</taxon>
    </lineage>
</organism>
<evidence type="ECO:0000255" key="1">
    <source>
        <dbReference type="HAMAP-Rule" id="MF_02115"/>
    </source>
</evidence>
<accession>D3S3T0</accession>
<reference key="1">
    <citation type="submission" date="2010-02" db="EMBL/GenBank/DDBJ databases">
        <title>Complete sequence of chromosome of Methanocaldococcus sp. FS406-22.</title>
        <authorList>
            <consortium name="US DOE Joint Genome Institute"/>
            <person name="Lucas S."/>
            <person name="Copeland A."/>
            <person name="Lapidus A."/>
            <person name="Cheng J.-F."/>
            <person name="Bruce D."/>
            <person name="Goodwin L."/>
            <person name="Pitluck S."/>
            <person name="Teshima H."/>
            <person name="Detter J.C."/>
            <person name="Han C."/>
            <person name="Tapia R."/>
            <person name="Larimer F."/>
            <person name="Land M."/>
            <person name="Hauser L."/>
            <person name="Kyrpides N."/>
            <person name="Mikhailova N."/>
            <person name="Sieprawska-Lupa M."/>
            <person name="Leigh J."/>
            <person name="Whitman W.B."/>
            <person name="Woyke T."/>
        </authorList>
    </citation>
    <scope>NUCLEOTIDE SEQUENCE [LARGE SCALE GENOMIC DNA]</scope>
    <source>
        <strain>FS406-22</strain>
    </source>
</reference>
<protein>
    <recommendedName>
        <fullName evidence="1">FAD synthase</fullName>
        <ecNumber evidence="1">2.7.7.2</ecNumber>
    </recommendedName>
    <alternativeName>
        <fullName evidence="1">FMN adenylyltransferase</fullName>
    </alternativeName>
    <alternativeName>
        <fullName evidence="1">Flavin adenine dinucleotide synthase</fullName>
    </alternativeName>
</protein>
<keyword id="KW-0067">ATP-binding</keyword>
<keyword id="KW-0274">FAD</keyword>
<keyword id="KW-0285">Flavoprotein</keyword>
<keyword id="KW-0288">FMN</keyword>
<keyword id="KW-0547">Nucleotide-binding</keyword>
<keyword id="KW-0548">Nucleotidyltransferase</keyword>
<keyword id="KW-0808">Transferase</keyword>
<dbReference type="EC" id="2.7.7.2" evidence="1"/>
<dbReference type="EMBL" id="CP001901">
    <property type="protein sequence ID" value="ADC69494.1"/>
    <property type="molecule type" value="Genomic_DNA"/>
</dbReference>
<dbReference type="RefSeq" id="WP_012980404.1">
    <property type="nucleotide sequence ID" value="NC_013887.1"/>
</dbReference>
<dbReference type="SMR" id="D3S3T0"/>
<dbReference type="STRING" id="644281.MFS40622_0810"/>
<dbReference type="GeneID" id="8804651"/>
<dbReference type="KEGG" id="mfs:MFS40622_0810"/>
<dbReference type="eggNOG" id="arCOG01222">
    <property type="taxonomic scope" value="Archaea"/>
</dbReference>
<dbReference type="HOGENOM" id="CLU_034585_2_1_2"/>
<dbReference type="OrthoDB" id="1912at2157"/>
<dbReference type="UniPathway" id="UPA00277">
    <property type="reaction ID" value="UER00407"/>
</dbReference>
<dbReference type="Proteomes" id="UP000002189">
    <property type="component" value="Chromosome"/>
</dbReference>
<dbReference type="GO" id="GO:0005524">
    <property type="term" value="F:ATP binding"/>
    <property type="evidence" value="ECO:0007669"/>
    <property type="project" value="UniProtKB-UniRule"/>
</dbReference>
<dbReference type="GO" id="GO:0003919">
    <property type="term" value="F:FMN adenylyltransferase activity"/>
    <property type="evidence" value="ECO:0007669"/>
    <property type="project" value="UniProtKB-UniRule"/>
</dbReference>
<dbReference type="GO" id="GO:0006747">
    <property type="term" value="P:FAD biosynthetic process"/>
    <property type="evidence" value="ECO:0007669"/>
    <property type="project" value="UniProtKB-UniRule"/>
</dbReference>
<dbReference type="GO" id="GO:0046444">
    <property type="term" value="P:FMN metabolic process"/>
    <property type="evidence" value="ECO:0007669"/>
    <property type="project" value="UniProtKB-UniRule"/>
</dbReference>
<dbReference type="CDD" id="cd02170">
    <property type="entry name" value="cytidylyltransferase"/>
    <property type="match status" value="1"/>
</dbReference>
<dbReference type="FunFam" id="3.40.50.620:FF:000575">
    <property type="entry name" value="FAD synthase"/>
    <property type="match status" value="1"/>
</dbReference>
<dbReference type="Gene3D" id="3.40.50.620">
    <property type="entry name" value="HUPs"/>
    <property type="match status" value="1"/>
</dbReference>
<dbReference type="HAMAP" id="MF_02115">
    <property type="entry name" value="FAD_synth_arch"/>
    <property type="match status" value="1"/>
</dbReference>
<dbReference type="InterPro" id="IPR050385">
    <property type="entry name" value="Archaeal_FAD_synthase"/>
</dbReference>
<dbReference type="InterPro" id="IPR004821">
    <property type="entry name" value="Cyt_trans-like"/>
</dbReference>
<dbReference type="InterPro" id="IPR024902">
    <property type="entry name" value="FAD_synth_RibL"/>
</dbReference>
<dbReference type="InterPro" id="IPR014729">
    <property type="entry name" value="Rossmann-like_a/b/a_fold"/>
</dbReference>
<dbReference type="NCBIfam" id="TIGR00125">
    <property type="entry name" value="cyt_tran_rel"/>
    <property type="match status" value="1"/>
</dbReference>
<dbReference type="PANTHER" id="PTHR43793">
    <property type="entry name" value="FAD SYNTHASE"/>
    <property type="match status" value="1"/>
</dbReference>
<dbReference type="PANTHER" id="PTHR43793:SF1">
    <property type="entry name" value="FAD SYNTHASE"/>
    <property type="match status" value="1"/>
</dbReference>
<dbReference type="Pfam" id="PF01467">
    <property type="entry name" value="CTP_transf_like"/>
    <property type="match status" value="1"/>
</dbReference>
<dbReference type="SUPFAM" id="SSF52374">
    <property type="entry name" value="Nucleotidylyl transferase"/>
    <property type="match status" value="1"/>
</dbReference>
<proteinExistence type="inferred from homology"/>
<sequence>MEKKKIVVTAGTFDILHPGHYEILKFAKSLGDELIVIVARDETVKKLKGRKPIIPEEQRREMVEALKPVDKAVLGSLKNKLEPILKLKPDIIVLGPDQTTFDEETLKQELAKYNLYPEIVRFRGYKKCPFHSSFDIVKEIIRRFCSKEIKI</sequence>